<organism>
    <name type="scientific">Shigella flexneri</name>
    <dbReference type="NCBI Taxonomy" id="623"/>
    <lineage>
        <taxon>Bacteria</taxon>
        <taxon>Pseudomonadati</taxon>
        <taxon>Pseudomonadota</taxon>
        <taxon>Gammaproteobacteria</taxon>
        <taxon>Enterobacterales</taxon>
        <taxon>Enterobacteriaceae</taxon>
        <taxon>Shigella</taxon>
    </lineage>
</organism>
<accession>Q83LP0</accession>
<name>MSBA_SHIFL</name>
<keyword id="KW-0067">ATP-binding</keyword>
<keyword id="KW-0997">Cell inner membrane</keyword>
<keyword id="KW-1003">Cell membrane</keyword>
<keyword id="KW-0445">Lipid transport</keyword>
<keyword id="KW-0472">Membrane</keyword>
<keyword id="KW-0547">Nucleotide-binding</keyword>
<keyword id="KW-1185">Reference proteome</keyword>
<keyword id="KW-1278">Translocase</keyword>
<keyword id="KW-0812">Transmembrane</keyword>
<keyword id="KW-1133">Transmembrane helix</keyword>
<keyword id="KW-0813">Transport</keyword>
<sequence>MHNDKDLSTWQTFRRLWPTIAPFKAGLIVAGVALILNAASDTFMLSLLKPLLDDGFGKTDRSVLVWMPLVVIGLMILRGITSYVSSYCISWVSGKVVMTMRRRLFGHMMGMPVSFFDKQSTGTLLSRITYDSEQVASSSSGALITVVREGASIIGLFIMMFYYSWQLSIILIVLAPIVSIAIRVVSKRFRNISKNMQNTMGQVTTSAEQMLKGHKEVLIFGGQEVETKRFDKVSNRMRLQGMKMVSASSISDPIIQLIASLALAFVLYAASFPSVMDNLTAGTITVVFSSMIALMRPLKSLTNVNAQFQRGMAACQTLFTILDSEQEKDEGKRVIERATGDVEFRNVTFTYPGRDVPALRNINLKIPAGKTVALVGRSGSGKSTIASLITRFYDIDEGEILMDGHDLREYTLASLRNQVALVSQNVHLFNDTVANNIAYARTEQYSREQIEEAARMAYAMDFINKMDNGLDTVIGENGVLLSGGQRQRIAIARALLRDSPILILDEATSALDTESERAIQAALDELQKNRTSLVIAHRLSTIEKADEIVVVEDGVIVERGTHNDLLEHRGVYAQLHKMQFGQ</sequence>
<dbReference type="EC" id="7.5.2.6" evidence="1"/>
<dbReference type="EMBL" id="AE005674">
    <property type="protein sequence ID" value="AAN42539.1"/>
    <property type="molecule type" value="Genomic_DNA"/>
</dbReference>
<dbReference type="EMBL" id="AE014073">
    <property type="protein sequence ID" value="AAP16425.1"/>
    <property type="molecule type" value="Genomic_DNA"/>
</dbReference>
<dbReference type="RefSeq" id="NP_706832.1">
    <property type="nucleotide sequence ID" value="NC_004337.2"/>
</dbReference>
<dbReference type="RefSeq" id="WP_000551266.1">
    <property type="nucleotide sequence ID" value="NZ_WPGW01000072.1"/>
</dbReference>
<dbReference type="SMR" id="Q83LP0"/>
<dbReference type="STRING" id="198214.SF0910"/>
<dbReference type="PaxDb" id="198214-SF0910"/>
<dbReference type="GeneID" id="1023860"/>
<dbReference type="KEGG" id="sfl:SF0910"/>
<dbReference type="KEGG" id="sfx:S0974"/>
<dbReference type="PATRIC" id="fig|198214.7.peg.1061"/>
<dbReference type="HOGENOM" id="CLU_000604_84_3_6"/>
<dbReference type="Proteomes" id="UP000001006">
    <property type="component" value="Chromosome"/>
</dbReference>
<dbReference type="Proteomes" id="UP000002673">
    <property type="component" value="Chromosome"/>
</dbReference>
<dbReference type="GO" id="GO:0005886">
    <property type="term" value="C:plasma membrane"/>
    <property type="evidence" value="ECO:0007669"/>
    <property type="project" value="UniProtKB-SubCell"/>
</dbReference>
<dbReference type="GO" id="GO:0015421">
    <property type="term" value="F:ABC-type oligopeptide transporter activity"/>
    <property type="evidence" value="ECO:0007669"/>
    <property type="project" value="TreeGrafter"/>
</dbReference>
<dbReference type="GO" id="GO:0005524">
    <property type="term" value="F:ATP binding"/>
    <property type="evidence" value="ECO:0007669"/>
    <property type="project" value="UniProtKB-KW"/>
</dbReference>
<dbReference type="GO" id="GO:0016887">
    <property type="term" value="F:ATP hydrolysis activity"/>
    <property type="evidence" value="ECO:0007669"/>
    <property type="project" value="InterPro"/>
</dbReference>
<dbReference type="GO" id="GO:0034040">
    <property type="term" value="F:ATPase-coupled lipid transmembrane transporter activity"/>
    <property type="evidence" value="ECO:0007669"/>
    <property type="project" value="InterPro"/>
</dbReference>
<dbReference type="CDD" id="cd18552">
    <property type="entry name" value="ABC_6TM_MsbA_like"/>
    <property type="match status" value="1"/>
</dbReference>
<dbReference type="CDD" id="cd03251">
    <property type="entry name" value="ABCC_MsbA"/>
    <property type="match status" value="1"/>
</dbReference>
<dbReference type="FunFam" id="1.20.1560.10:FF:000008">
    <property type="entry name" value="Lipid A export ATP-binding/permease protein MsbA"/>
    <property type="match status" value="1"/>
</dbReference>
<dbReference type="FunFam" id="3.40.50.300:FF:000140">
    <property type="entry name" value="Lipid A export ATP-binding/permease protein MsbA"/>
    <property type="match status" value="1"/>
</dbReference>
<dbReference type="Gene3D" id="1.20.1560.10">
    <property type="entry name" value="ABC transporter type 1, transmembrane domain"/>
    <property type="match status" value="1"/>
</dbReference>
<dbReference type="Gene3D" id="3.40.50.300">
    <property type="entry name" value="P-loop containing nucleotide triphosphate hydrolases"/>
    <property type="match status" value="1"/>
</dbReference>
<dbReference type="InterPro" id="IPR003593">
    <property type="entry name" value="AAA+_ATPase"/>
</dbReference>
<dbReference type="InterPro" id="IPR011527">
    <property type="entry name" value="ABC1_TM_dom"/>
</dbReference>
<dbReference type="InterPro" id="IPR036640">
    <property type="entry name" value="ABC1_TM_sf"/>
</dbReference>
<dbReference type="InterPro" id="IPR003439">
    <property type="entry name" value="ABC_transporter-like_ATP-bd"/>
</dbReference>
<dbReference type="InterPro" id="IPR017871">
    <property type="entry name" value="ABC_transporter-like_CS"/>
</dbReference>
<dbReference type="InterPro" id="IPR011917">
    <property type="entry name" value="ABC_transpr_lipidA"/>
</dbReference>
<dbReference type="InterPro" id="IPR027417">
    <property type="entry name" value="P-loop_NTPase"/>
</dbReference>
<dbReference type="InterPro" id="IPR039421">
    <property type="entry name" value="Type_1_exporter"/>
</dbReference>
<dbReference type="NCBIfam" id="TIGR02203">
    <property type="entry name" value="MsbA_lipidA"/>
    <property type="match status" value="1"/>
</dbReference>
<dbReference type="NCBIfam" id="NF008381">
    <property type="entry name" value="PRK11176.1"/>
    <property type="match status" value="1"/>
</dbReference>
<dbReference type="PANTHER" id="PTHR43394:SF1">
    <property type="entry name" value="ATP-BINDING CASSETTE SUB-FAMILY B MEMBER 10, MITOCHONDRIAL"/>
    <property type="match status" value="1"/>
</dbReference>
<dbReference type="PANTHER" id="PTHR43394">
    <property type="entry name" value="ATP-DEPENDENT PERMEASE MDL1, MITOCHONDRIAL"/>
    <property type="match status" value="1"/>
</dbReference>
<dbReference type="Pfam" id="PF00664">
    <property type="entry name" value="ABC_membrane"/>
    <property type="match status" value="1"/>
</dbReference>
<dbReference type="Pfam" id="PF00005">
    <property type="entry name" value="ABC_tran"/>
    <property type="match status" value="1"/>
</dbReference>
<dbReference type="SMART" id="SM00382">
    <property type="entry name" value="AAA"/>
    <property type="match status" value="1"/>
</dbReference>
<dbReference type="SUPFAM" id="SSF90123">
    <property type="entry name" value="ABC transporter transmembrane region"/>
    <property type="match status" value="1"/>
</dbReference>
<dbReference type="SUPFAM" id="SSF52540">
    <property type="entry name" value="P-loop containing nucleoside triphosphate hydrolases"/>
    <property type="match status" value="1"/>
</dbReference>
<dbReference type="PROSITE" id="PS50929">
    <property type="entry name" value="ABC_TM1F"/>
    <property type="match status" value="1"/>
</dbReference>
<dbReference type="PROSITE" id="PS00211">
    <property type="entry name" value="ABC_TRANSPORTER_1"/>
    <property type="match status" value="1"/>
</dbReference>
<dbReference type="PROSITE" id="PS50893">
    <property type="entry name" value="ABC_TRANSPORTER_2"/>
    <property type="match status" value="1"/>
</dbReference>
<dbReference type="PROSITE" id="PS51239">
    <property type="entry name" value="MSBA"/>
    <property type="match status" value="1"/>
</dbReference>
<evidence type="ECO:0000255" key="1">
    <source>
        <dbReference type="HAMAP-Rule" id="MF_01703"/>
    </source>
</evidence>
<gene>
    <name evidence="1" type="primary">msbA</name>
    <name type="ordered locus">SF0910</name>
    <name type="ordered locus">S0974</name>
</gene>
<reference key="1">
    <citation type="journal article" date="2002" name="Nucleic Acids Res.">
        <title>Genome sequence of Shigella flexneri 2a: insights into pathogenicity through comparison with genomes of Escherichia coli K12 and O157.</title>
        <authorList>
            <person name="Jin Q."/>
            <person name="Yuan Z."/>
            <person name="Xu J."/>
            <person name="Wang Y."/>
            <person name="Shen Y."/>
            <person name="Lu W."/>
            <person name="Wang J."/>
            <person name="Liu H."/>
            <person name="Yang J."/>
            <person name="Yang F."/>
            <person name="Zhang X."/>
            <person name="Zhang J."/>
            <person name="Yang G."/>
            <person name="Wu H."/>
            <person name="Qu D."/>
            <person name="Dong J."/>
            <person name="Sun L."/>
            <person name="Xue Y."/>
            <person name="Zhao A."/>
            <person name="Gao Y."/>
            <person name="Zhu J."/>
            <person name="Kan B."/>
            <person name="Ding K."/>
            <person name="Chen S."/>
            <person name="Cheng H."/>
            <person name="Yao Z."/>
            <person name="He B."/>
            <person name="Chen R."/>
            <person name="Ma D."/>
            <person name="Qiang B."/>
            <person name="Wen Y."/>
            <person name="Hou Y."/>
            <person name="Yu J."/>
        </authorList>
    </citation>
    <scope>NUCLEOTIDE SEQUENCE [LARGE SCALE GENOMIC DNA]</scope>
    <source>
        <strain>301 / Serotype 2a</strain>
    </source>
</reference>
<reference key="2">
    <citation type="journal article" date="2003" name="Infect. Immun.">
        <title>Complete genome sequence and comparative genomics of Shigella flexneri serotype 2a strain 2457T.</title>
        <authorList>
            <person name="Wei J."/>
            <person name="Goldberg M.B."/>
            <person name="Burland V."/>
            <person name="Venkatesan M.M."/>
            <person name="Deng W."/>
            <person name="Fournier G."/>
            <person name="Mayhew G.F."/>
            <person name="Plunkett G. III"/>
            <person name="Rose D.J."/>
            <person name="Darling A."/>
            <person name="Mau B."/>
            <person name="Perna N.T."/>
            <person name="Payne S.M."/>
            <person name="Runyen-Janecky L.J."/>
            <person name="Zhou S."/>
            <person name="Schwartz D.C."/>
            <person name="Blattner F.R."/>
        </authorList>
    </citation>
    <scope>NUCLEOTIDE SEQUENCE [LARGE SCALE GENOMIC DNA]</scope>
    <source>
        <strain>ATCC 700930 / 2457T / Serotype 2a</strain>
    </source>
</reference>
<comment type="function">
    <text evidence="1">Involved in lipopolysaccharide (LPS) biosynthesis. Translocates lipid A-core from the inner to the outer leaflet of the inner membrane. Transmembrane domains (TMD) form a pore in the inner membrane and the ATP-binding domain (NBD) is responsible for energy generation.</text>
</comment>
<comment type="catalytic activity">
    <reaction evidence="1">
        <text>ATP + H2O + lipid A-core oligosaccharideSide 1 = ADP + phosphate + lipid A-core oligosaccharideSide 2.</text>
        <dbReference type="EC" id="7.5.2.6"/>
    </reaction>
</comment>
<comment type="subunit">
    <text evidence="1">Homodimer.</text>
</comment>
<comment type="subcellular location">
    <subcellularLocation>
        <location evidence="1">Cell inner membrane</location>
        <topology evidence="1">Multi-pass membrane protein</topology>
    </subcellularLocation>
</comment>
<comment type="domain">
    <text evidence="1">In MsbA the ATP-binding domain (NBD) and the transmembrane domain (TMD) are fused.</text>
</comment>
<comment type="similarity">
    <text evidence="1">Belongs to the ABC transporter superfamily. Lipid exporter (TC 3.A.1.106) family.</text>
</comment>
<protein>
    <recommendedName>
        <fullName evidence="1">ATP-dependent lipid A-core flippase</fullName>
        <ecNumber evidence="1">7.5.2.6</ecNumber>
    </recommendedName>
    <alternativeName>
        <fullName evidence="1">Lipid A export ATP-binding/permease protein MsbA</fullName>
    </alternativeName>
</protein>
<proteinExistence type="inferred from homology"/>
<feature type="chain" id="PRO_0000092600" description="ATP-dependent lipid A-core flippase">
    <location>
        <begin position="1"/>
        <end position="582"/>
    </location>
</feature>
<feature type="transmembrane region" description="Helical" evidence="1">
    <location>
        <begin position="16"/>
        <end position="36"/>
    </location>
</feature>
<feature type="transmembrane region" description="Helical" evidence="1">
    <location>
        <begin position="63"/>
        <end position="83"/>
    </location>
</feature>
<feature type="transmembrane region" description="Helical" evidence="1">
    <location>
        <begin position="153"/>
        <end position="173"/>
    </location>
</feature>
<feature type="transmembrane region" description="Helical" evidence="1">
    <location>
        <begin position="253"/>
        <end position="273"/>
    </location>
</feature>
<feature type="transmembrane region" description="Helical" evidence="1">
    <location>
        <begin position="275"/>
        <end position="295"/>
    </location>
</feature>
<feature type="domain" description="ABC transmembrane type-1" evidence="1">
    <location>
        <begin position="28"/>
        <end position="310"/>
    </location>
</feature>
<feature type="domain" description="ABC transporter" evidence="1">
    <location>
        <begin position="342"/>
        <end position="578"/>
    </location>
</feature>
<feature type="binding site" evidence="1">
    <location>
        <begin position="376"/>
        <end position="383"/>
    </location>
    <ligand>
        <name>ATP</name>
        <dbReference type="ChEBI" id="CHEBI:30616"/>
    </ligand>
</feature>